<organism>
    <name type="scientific">Actinobacillus succinogenes (strain ATCC 55618 / DSM 22257 / CCUG 43843 / 130Z)</name>
    <dbReference type="NCBI Taxonomy" id="339671"/>
    <lineage>
        <taxon>Bacteria</taxon>
        <taxon>Pseudomonadati</taxon>
        <taxon>Pseudomonadota</taxon>
        <taxon>Gammaproteobacteria</taxon>
        <taxon>Pasteurellales</taxon>
        <taxon>Pasteurellaceae</taxon>
        <taxon>Actinobacillus</taxon>
    </lineage>
</organism>
<name>CLPX_ACTSZ</name>
<proteinExistence type="inferred from homology"/>
<reference key="1">
    <citation type="journal article" date="2010" name="BMC Genomics">
        <title>A genomic perspective on the potential of Actinobacillus succinogenes for industrial succinate production.</title>
        <authorList>
            <person name="McKinlay J.B."/>
            <person name="Laivenieks M."/>
            <person name="Schindler B.D."/>
            <person name="McKinlay A.A."/>
            <person name="Siddaramappa S."/>
            <person name="Challacombe J.F."/>
            <person name="Lowry S.R."/>
            <person name="Clum A."/>
            <person name="Lapidus A.L."/>
            <person name="Burkhart K.B."/>
            <person name="Harkins V."/>
            <person name="Vieille C."/>
        </authorList>
    </citation>
    <scope>NUCLEOTIDE SEQUENCE [LARGE SCALE GENOMIC DNA]</scope>
    <source>
        <strain>ATCC 55618 / DSM 22257 / CCUG 43843 / 130Z</strain>
    </source>
</reference>
<keyword id="KW-0067">ATP-binding</keyword>
<keyword id="KW-0143">Chaperone</keyword>
<keyword id="KW-0479">Metal-binding</keyword>
<keyword id="KW-0547">Nucleotide-binding</keyword>
<keyword id="KW-1185">Reference proteome</keyword>
<keyword id="KW-0862">Zinc</keyword>
<accession>A6VME2</accession>
<dbReference type="EMBL" id="CP000746">
    <property type="protein sequence ID" value="ABR74139.1"/>
    <property type="molecule type" value="Genomic_DNA"/>
</dbReference>
<dbReference type="RefSeq" id="WP_012072517.1">
    <property type="nucleotide sequence ID" value="NC_009655.1"/>
</dbReference>
<dbReference type="SMR" id="A6VME2"/>
<dbReference type="STRING" id="339671.Asuc_0767"/>
<dbReference type="KEGG" id="asu:Asuc_0767"/>
<dbReference type="eggNOG" id="COG1219">
    <property type="taxonomic scope" value="Bacteria"/>
</dbReference>
<dbReference type="HOGENOM" id="CLU_014218_8_2_6"/>
<dbReference type="OrthoDB" id="9804062at2"/>
<dbReference type="Proteomes" id="UP000001114">
    <property type="component" value="Chromosome"/>
</dbReference>
<dbReference type="GO" id="GO:0009376">
    <property type="term" value="C:HslUV protease complex"/>
    <property type="evidence" value="ECO:0007669"/>
    <property type="project" value="TreeGrafter"/>
</dbReference>
<dbReference type="GO" id="GO:0005524">
    <property type="term" value="F:ATP binding"/>
    <property type="evidence" value="ECO:0007669"/>
    <property type="project" value="UniProtKB-UniRule"/>
</dbReference>
<dbReference type="GO" id="GO:0016887">
    <property type="term" value="F:ATP hydrolysis activity"/>
    <property type="evidence" value="ECO:0007669"/>
    <property type="project" value="InterPro"/>
</dbReference>
<dbReference type="GO" id="GO:0140662">
    <property type="term" value="F:ATP-dependent protein folding chaperone"/>
    <property type="evidence" value="ECO:0007669"/>
    <property type="project" value="InterPro"/>
</dbReference>
<dbReference type="GO" id="GO:0046983">
    <property type="term" value="F:protein dimerization activity"/>
    <property type="evidence" value="ECO:0007669"/>
    <property type="project" value="InterPro"/>
</dbReference>
<dbReference type="GO" id="GO:0051082">
    <property type="term" value="F:unfolded protein binding"/>
    <property type="evidence" value="ECO:0007669"/>
    <property type="project" value="UniProtKB-UniRule"/>
</dbReference>
<dbReference type="GO" id="GO:0008270">
    <property type="term" value="F:zinc ion binding"/>
    <property type="evidence" value="ECO:0007669"/>
    <property type="project" value="InterPro"/>
</dbReference>
<dbReference type="GO" id="GO:0051301">
    <property type="term" value="P:cell division"/>
    <property type="evidence" value="ECO:0007669"/>
    <property type="project" value="TreeGrafter"/>
</dbReference>
<dbReference type="GO" id="GO:0051603">
    <property type="term" value="P:proteolysis involved in protein catabolic process"/>
    <property type="evidence" value="ECO:0007669"/>
    <property type="project" value="TreeGrafter"/>
</dbReference>
<dbReference type="CDD" id="cd19497">
    <property type="entry name" value="RecA-like_ClpX"/>
    <property type="match status" value="1"/>
</dbReference>
<dbReference type="FunFam" id="1.10.8.60:FF:000002">
    <property type="entry name" value="ATP-dependent Clp protease ATP-binding subunit ClpX"/>
    <property type="match status" value="1"/>
</dbReference>
<dbReference type="FunFam" id="3.40.50.300:FF:000005">
    <property type="entry name" value="ATP-dependent Clp protease ATP-binding subunit ClpX"/>
    <property type="match status" value="1"/>
</dbReference>
<dbReference type="Gene3D" id="1.10.8.60">
    <property type="match status" value="1"/>
</dbReference>
<dbReference type="Gene3D" id="6.20.220.10">
    <property type="entry name" value="ClpX chaperone, C4-type zinc finger domain"/>
    <property type="match status" value="1"/>
</dbReference>
<dbReference type="Gene3D" id="3.40.50.300">
    <property type="entry name" value="P-loop containing nucleotide triphosphate hydrolases"/>
    <property type="match status" value="1"/>
</dbReference>
<dbReference type="HAMAP" id="MF_00175">
    <property type="entry name" value="ClpX"/>
    <property type="match status" value="1"/>
</dbReference>
<dbReference type="InterPro" id="IPR003593">
    <property type="entry name" value="AAA+_ATPase"/>
</dbReference>
<dbReference type="InterPro" id="IPR050052">
    <property type="entry name" value="ATP-dep_Clp_protease_ClpX"/>
</dbReference>
<dbReference type="InterPro" id="IPR003959">
    <property type="entry name" value="ATPase_AAA_core"/>
</dbReference>
<dbReference type="InterPro" id="IPR019489">
    <property type="entry name" value="Clp_ATPase_C"/>
</dbReference>
<dbReference type="InterPro" id="IPR004487">
    <property type="entry name" value="Clp_protease_ATP-bd_su_ClpX"/>
</dbReference>
<dbReference type="InterPro" id="IPR046425">
    <property type="entry name" value="ClpX_bact"/>
</dbReference>
<dbReference type="InterPro" id="IPR027417">
    <property type="entry name" value="P-loop_NTPase"/>
</dbReference>
<dbReference type="InterPro" id="IPR010603">
    <property type="entry name" value="Znf_CppX_C4"/>
</dbReference>
<dbReference type="InterPro" id="IPR038366">
    <property type="entry name" value="Znf_CppX_C4_sf"/>
</dbReference>
<dbReference type="NCBIfam" id="TIGR00382">
    <property type="entry name" value="clpX"/>
    <property type="match status" value="1"/>
</dbReference>
<dbReference type="NCBIfam" id="NF003745">
    <property type="entry name" value="PRK05342.1"/>
    <property type="match status" value="1"/>
</dbReference>
<dbReference type="PANTHER" id="PTHR48102:SF7">
    <property type="entry name" value="ATP-DEPENDENT CLP PROTEASE ATP-BINDING SUBUNIT CLPX-LIKE, MITOCHONDRIAL"/>
    <property type="match status" value="1"/>
</dbReference>
<dbReference type="PANTHER" id="PTHR48102">
    <property type="entry name" value="ATP-DEPENDENT CLP PROTEASE ATP-BINDING SUBUNIT CLPX-LIKE, MITOCHONDRIAL-RELATED"/>
    <property type="match status" value="1"/>
</dbReference>
<dbReference type="Pfam" id="PF07724">
    <property type="entry name" value="AAA_2"/>
    <property type="match status" value="1"/>
</dbReference>
<dbReference type="Pfam" id="PF10431">
    <property type="entry name" value="ClpB_D2-small"/>
    <property type="match status" value="1"/>
</dbReference>
<dbReference type="Pfam" id="PF06689">
    <property type="entry name" value="zf-C4_ClpX"/>
    <property type="match status" value="1"/>
</dbReference>
<dbReference type="SMART" id="SM00382">
    <property type="entry name" value="AAA"/>
    <property type="match status" value="1"/>
</dbReference>
<dbReference type="SMART" id="SM01086">
    <property type="entry name" value="ClpB_D2-small"/>
    <property type="match status" value="1"/>
</dbReference>
<dbReference type="SMART" id="SM00994">
    <property type="entry name" value="zf-C4_ClpX"/>
    <property type="match status" value="1"/>
</dbReference>
<dbReference type="SUPFAM" id="SSF57716">
    <property type="entry name" value="Glucocorticoid receptor-like (DNA-binding domain)"/>
    <property type="match status" value="1"/>
</dbReference>
<dbReference type="SUPFAM" id="SSF52540">
    <property type="entry name" value="P-loop containing nucleoside triphosphate hydrolases"/>
    <property type="match status" value="1"/>
</dbReference>
<dbReference type="PROSITE" id="PS51902">
    <property type="entry name" value="CLPX_ZB"/>
    <property type="match status" value="1"/>
</dbReference>
<sequence>MTDEKETRCSFCGKSQDEVGKLIAGTSGYICGDCIDLCHTLLHEEIEAEEDESADEIEEKLPTPHEIREHLDDYVIGQDYAKKVLAVALYNHYKRLRSGHKTDAVELSKSNVLLIGPTGSGKTLLAQTLARMLNVPFAMADATTLTEAGYVGEDVENIIQKLLQNCDYDTEKAEQGIIYIDEIDKITRKSANPSITRDVSGEGVQQALLKMIEGTIAAVPPQGGRKHPQQDMIRVDTSKILFICGGAFAGLDKIIEKRVHVGSGIGFNAEVKGEQDELTLTDLFKQIETEDLIKFGMIPEFIGRLPVIAPLSELDENALISILTEPKNALTKQYQALFGLEDVELEFTPESLKAMAKKALARKTGARGLRSIVEGILLDTMYDLPSQENLAKVIVDEDVIEKGEKPKLIFK</sequence>
<gene>
    <name evidence="1" type="primary">clpX</name>
    <name type="ordered locus">Asuc_0767</name>
</gene>
<feature type="chain" id="PRO_1000071620" description="ATP-dependent Clp protease ATP-binding subunit ClpX">
    <location>
        <begin position="1"/>
        <end position="411"/>
    </location>
</feature>
<feature type="domain" description="ClpX-type ZB" evidence="2">
    <location>
        <begin position="1"/>
        <end position="50"/>
    </location>
</feature>
<feature type="binding site" evidence="2">
    <location>
        <position position="9"/>
    </location>
    <ligand>
        <name>Zn(2+)</name>
        <dbReference type="ChEBI" id="CHEBI:29105"/>
    </ligand>
</feature>
<feature type="binding site" evidence="2">
    <location>
        <position position="12"/>
    </location>
    <ligand>
        <name>Zn(2+)</name>
        <dbReference type="ChEBI" id="CHEBI:29105"/>
    </ligand>
</feature>
<feature type="binding site" evidence="2">
    <location>
        <position position="31"/>
    </location>
    <ligand>
        <name>Zn(2+)</name>
        <dbReference type="ChEBI" id="CHEBI:29105"/>
    </ligand>
</feature>
<feature type="binding site" evidence="2">
    <location>
        <position position="34"/>
    </location>
    <ligand>
        <name>Zn(2+)</name>
        <dbReference type="ChEBI" id="CHEBI:29105"/>
    </ligand>
</feature>
<feature type="binding site" evidence="1">
    <location>
        <begin position="117"/>
        <end position="124"/>
    </location>
    <ligand>
        <name>ATP</name>
        <dbReference type="ChEBI" id="CHEBI:30616"/>
    </ligand>
</feature>
<protein>
    <recommendedName>
        <fullName evidence="1">ATP-dependent Clp protease ATP-binding subunit ClpX</fullName>
    </recommendedName>
</protein>
<evidence type="ECO:0000255" key="1">
    <source>
        <dbReference type="HAMAP-Rule" id="MF_00175"/>
    </source>
</evidence>
<evidence type="ECO:0000255" key="2">
    <source>
        <dbReference type="PROSITE-ProRule" id="PRU01250"/>
    </source>
</evidence>
<comment type="function">
    <text evidence="1">ATP-dependent specificity component of the Clp protease. It directs the protease to specific substrates. Can perform chaperone functions in the absence of ClpP.</text>
</comment>
<comment type="subunit">
    <text evidence="1">Component of the ClpX-ClpP complex. Forms a hexameric ring that, in the presence of ATP, binds to fourteen ClpP subunits assembled into a disk-like structure with a central cavity, resembling the structure of eukaryotic proteasomes.</text>
</comment>
<comment type="similarity">
    <text evidence="1">Belongs to the ClpX chaperone family.</text>
</comment>